<comment type="function">
    <text>Binds to WNT proteins and inhibits their activities. May be involved in mesoderm segmentation.</text>
</comment>
<comment type="subcellular location">
    <subcellularLocation>
        <location>Secreted</location>
    </subcellularLocation>
</comment>
<comment type="tissue specificity">
    <text>During somatogenesis, expressed predominantly in unsegmented paraxial presomitic mesoderm and, to a much lesser extent, in newly segmented somites.</text>
</comment>
<comment type="developmental stage">
    <text>First expressed at neurula stages.</text>
</comment>
<protein>
    <recommendedName>
        <fullName>Wnt inhibitory factor 1</fullName>
        <shortName>WIF-1</shortName>
    </recommendedName>
</protein>
<reference key="1">
    <citation type="journal article" date="1999" name="Nature">
        <title>A new secreted protein that binds to Wnt proteins and inhibits their activities.</title>
        <authorList>
            <person name="Hsieh J.-C."/>
            <person name="Kodjabachian L."/>
            <person name="Rebbert M.L."/>
            <person name="Rattner A."/>
            <person name="Smallwood P.M."/>
            <person name="Samos C.H."/>
            <person name="Nusse R."/>
            <person name="Dawid I.B."/>
            <person name="Nathans J."/>
        </authorList>
    </citation>
    <scope>NUCLEOTIDE SEQUENCE [MRNA]</scope>
</reference>
<keyword id="KW-0217">Developmental protein</keyword>
<keyword id="KW-1015">Disulfide bond</keyword>
<keyword id="KW-0245">EGF-like domain</keyword>
<keyword id="KW-0325">Glycoprotein</keyword>
<keyword id="KW-1185">Reference proteome</keyword>
<keyword id="KW-0677">Repeat</keyword>
<keyword id="KW-0964">Secreted</keyword>
<keyword id="KW-0732">Signal</keyword>
<keyword id="KW-0879">Wnt signaling pathway</keyword>
<accession>Q9W6F8</accession>
<gene>
    <name type="primary">wif1</name>
</gene>
<dbReference type="EMBL" id="AF122924">
    <property type="protein sequence ID" value="AAD25404.1"/>
    <property type="molecule type" value="mRNA"/>
</dbReference>
<dbReference type="RefSeq" id="NP_001084220.1">
    <property type="nucleotide sequence ID" value="NM_001090751.1"/>
</dbReference>
<dbReference type="SMR" id="Q9W6F8"/>
<dbReference type="GlyCosmos" id="Q9W6F8">
    <property type="glycosylation" value="2 sites, No reported glycans"/>
</dbReference>
<dbReference type="GeneID" id="399375"/>
<dbReference type="KEGG" id="xla:399375"/>
<dbReference type="AGR" id="Xenbase:XB-GENE-865617"/>
<dbReference type="CTD" id="399375"/>
<dbReference type="Xenbase" id="XB-GENE-865617">
    <property type="gene designation" value="wif1.S"/>
</dbReference>
<dbReference type="OrthoDB" id="10266706at2759"/>
<dbReference type="Proteomes" id="UP000186698">
    <property type="component" value="Chromosome 3S"/>
</dbReference>
<dbReference type="Bgee" id="399375">
    <property type="expression patterns" value="Expressed in testis and 8 other cell types or tissues"/>
</dbReference>
<dbReference type="GO" id="GO:0009986">
    <property type="term" value="C:cell surface"/>
    <property type="evidence" value="ECO:0000318"/>
    <property type="project" value="GO_Central"/>
</dbReference>
<dbReference type="GO" id="GO:0005576">
    <property type="term" value="C:extracellular region"/>
    <property type="evidence" value="ECO:0000318"/>
    <property type="project" value="GO_Central"/>
</dbReference>
<dbReference type="GO" id="GO:0005102">
    <property type="term" value="F:signaling receptor binding"/>
    <property type="evidence" value="ECO:0000318"/>
    <property type="project" value="GO_Central"/>
</dbReference>
<dbReference type="GO" id="GO:0016055">
    <property type="term" value="P:Wnt signaling pathway"/>
    <property type="evidence" value="ECO:0007669"/>
    <property type="project" value="UniProtKB-KW"/>
</dbReference>
<dbReference type="CDD" id="cd00054">
    <property type="entry name" value="EGF_CA"/>
    <property type="match status" value="1"/>
</dbReference>
<dbReference type="FunFam" id="2.60.40.2170:FF:000001">
    <property type="entry name" value="WNT inhibitory factor 1"/>
    <property type="match status" value="1"/>
</dbReference>
<dbReference type="FunFam" id="2.10.25.10:FF:000276">
    <property type="entry name" value="Wnt inhibitory factor 1"/>
    <property type="match status" value="1"/>
</dbReference>
<dbReference type="Gene3D" id="2.10.25.10">
    <property type="entry name" value="Laminin"/>
    <property type="match status" value="2"/>
</dbReference>
<dbReference type="Gene3D" id="2.60.40.2170">
    <property type="entry name" value="Wnt, WIF domain"/>
    <property type="match status" value="1"/>
</dbReference>
<dbReference type="InterPro" id="IPR050969">
    <property type="entry name" value="Dev_Signal_Modulators"/>
</dbReference>
<dbReference type="InterPro" id="IPR013032">
    <property type="entry name" value="EGF-like_CS"/>
</dbReference>
<dbReference type="InterPro" id="IPR000742">
    <property type="entry name" value="EGF-like_dom"/>
</dbReference>
<dbReference type="InterPro" id="IPR003306">
    <property type="entry name" value="WIF"/>
</dbReference>
<dbReference type="InterPro" id="IPR038677">
    <property type="entry name" value="WIF_sf"/>
</dbReference>
<dbReference type="InterPro" id="IPR013309">
    <property type="entry name" value="Wnt-inh"/>
</dbReference>
<dbReference type="PANTHER" id="PTHR14949">
    <property type="entry name" value="EGF-LIKE-DOMAIN, MULTIPLE 7, 8"/>
    <property type="match status" value="1"/>
</dbReference>
<dbReference type="PANTHER" id="PTHR14949:SF32">
    <property type="entry name" value="WNT INHIBITORY FACTOR 1"/>
    <property type="match status" value="1"/>
</dbReference>
<dbReference type="Pfam" id="PF12661">
    <property type="entry name" value="hEGF"/>
    <property type="match status" value="3"/>
</dbReference>
<dbReference type="Pfam" id="PF21795">
    <property type="entry name" value="JAG1-like_EGF2"/>
    <property type="match status" value="1"/>
</dbReference>
<dbReference type="Pfam" id="PF02019">
    <property type="entry name" value="WIF"/>
    <property type="match status" value="1"/>
</dbReference>
<dbReference type="PRINTS" id="PR01901">
    <property type="entry name" value="WIFPROTEIN"/>
</dbReference>
<dbReference type="SMART" id="SM00181">
    <property type="entry name" value="EGF"/>
    <property type="match status" value="5"/>
</dbReference>
<dbReference type="SMART" id="SM00469">
    <property type="entry name" value="WIF"/>
    <property type="match status" value="1"/>
</dbReference>
<dbReference type="PROSITE" id="PS00022">
    <property type="entry name" value="EGF_1"/>
    <property type="match status" value="5"/>
</dbReference>
<dbReference type="PROSITE" id="PS01186">
    <property type="entry name" value="EGF_2"/>
    <property type="match status" value="5"/>
</dbReference>
<dbReference type="PROSITE" id="PS50026">
    <property type="entry name" value="EGF_3"/>
    <property type="match status" value="4"/>
</dbReference>
<dbReference type="PROSITE" id="PS50814">
    <property type="entry name" value="WIF"/>
    <property type="match status" value="1"/>
</dbReference>
<evidence type="ECO:0000250" key="1"/>
<evidence type="ECO:0000255" key="2"/>
<evidence type="ECO:0000255" key="3">
    <source>
        <dbReference type="PROSITE-ProRule" id="PRU00076"/>
    </source>
</evidence>
<evidence type="ECO:0000255" key="4">
    <source>
        <dbReference type="PROSITE-ProRule" id="PRU00222"/>
    </source>
</evidence>
<evidence type="ECO:0000256" key="5">
    <source>
        <dbReference type="SAM" id="MobiDB-lite"/>
    </source>
</evidence>
<feature type="signal peptide" evidence="2">
    <location>
        <begin position="1"/>
        <end position="28"/>
    </location>
</feature>
<feature type="chain" id="PRO_0000007778" description="Wnt inhibitory factor 1">
    <location>
        <begin position="29"/>
        <end position="374"/>
    </location>
</feature>
<feature type="domain" description="WIF" evidence="4">
    <location>
        <begin position="33"/>
        <end position="172"/>
    </location>
</feature>
<feature type="domain" description="EGF-like 1" evidence="3">
    <location>
        <begin position="173"/>
        <end position="205"/>
    </location>
</feature>
<feature type="domain" description="EGF-like 2" evidence="3">
    <location>
        <begin position="208"/>
        <end position="237"/>
    </location>
</feature>
<feature type="domain" description="EGF-like 3" evidence="3">
    <location>
        <begin position="237"/>
        <end position="269"/>
    </location>
</feature>
<feature type="domain" description="EGF-like 4" evidence="3">
    <location>
        <begin position="270"/>
        <end position="301"/>
    </location>
</feature>
<feature type="domain" description="EGF-like 5" evidence="3">
    <location>
        <begin position="302"/>
        <end position="333"/>
    </location>
</feature>
<feature type="region of interest" description="Disordered" evidence="5">
    <location>
        <begin position="343"/>
        <end position="374"/>
    </location>
</feature>
<feature type="compositionally biased region" description="Polar residues" evidence="5">
    <location>
        <begin position="348"/>
        <end position="358"/>
    </location>
</feature>
<feature type="glycosylation site" description="N-linked (GlcNAc...) asparagine" evidence="2">
    <location>
        <position position="83"/>
    </location>
</feature>
<feature type="glycosylation site" description="N-linked (GlcNAc...) asparagine" evidence="2">
    <location>
        <position position="240"/>
    </location>
</feature>
<feature type="disulfide bond" evidence="1">
    <location>
        <begin position="135"/>
        <end position="172"/>
    </location>
</feature>
<feature type="disulfide bond" evidence="1">
    <location>
        <begin position="177"/>
        <end position="187"/>
    </location>
</feature>
<feature type="disulfide bond" evidence="1">
    <location>
        <begin position="181"/>
        <end position="193"/>
    </location>
</feature>
<feature type="disulfide bond" evidence="1">
    <location>
        <begin position="195"/>
        <end position="204"/>
    </location>
</feature>
<feature type="disulfide bond" evidence="1">
    <location>
        <begin position="209"/>
        <end position="219"/>
    </location>
</feature>
<feature type="disulfide bond" evidence="1">
    <location>
        <begin position="213"/>
        <end position="225"/>
    </location>
</feature>
<feature type="disulfide bond" evidence="1">
    <location>
        <begin position="227"/>
        <end position="236"/>
    </location>
</feature>
<feature type="disulfide bond" evidence="1">
    <location>
        <begin position="241"/>
        <end position="251"/>
    </location>
</feature>
<feature type="disulfide bond" evidence="1">
    <location>
        <begin position="245"/>
        <end position="257"/>
    </location>
</feature>
<feature type="disulfide bond" evidence="1">
    <location>
        <begin position="259"/>
        <end position="268"/>
    </location>
</feature>
<feature type="disulfide bond" evidence="1">
    <location>
        <begin position="273"/>
        <end position="283"/>
    </location>
</feature>
<feature type="disulfide bond" evidence="1">
    <location>
        <begin position="277"/>
        <end position="289"/>
    </location>
</feature>
<feature type="disulfide bond" evidence="1">
    <location>
        <begin position="291"/>
        <end position="300"/>
    </location>
</feature>
<feature type="disulfide bond" evidence="1">
    <location>
        <begin position="305"/>
        <end position="315"/>
    </location>
</feature>
<feature type="disulfide bond" evidence="1">
    <location>
        <begin position="309"/>
        <end position="321"/>
    </location>
</feature>
<feature type="disulfide bond" evidence="1">
    <location>
        <begin position="323"/>
        <end position="332"/>
    </location>
</feature>
<sequence length="374" mass="41071">MSLTGYFAAPLCSIFLFILAHADAGQQEDSLYMWIDAHQARVLIGFEEDILIVAEGKMAPFTHDFRKAQQRMPAIPVNIHAMNFTWQATGQAEYFYEFLSLRSLDKGIMADPTVNMPLLGTVPHKATVIQVGFPCLGNQDGVAAFEVNVIVMNSEGNVILQTPQNAIFFKTCQQAKCTGGCRNGGFCNDRHVCECPDGFYGPHCEKALCMPRCMNGGLCVTPGLCICPPGYYGINCDKVNCTTHCLNGGTCFYPGKCICPSGYEGEQCETSKCQQPCRNGGKCSGKNKCKCSKGYQGDLCSKPVCEPSCGAHGTCIEPNKCQCKEGWNGRYCNKKYGSNLMNALRPTGSRNRQHTPSPKRTEDRQALPESNYIW</sequence>
<organism>
    <name type="scientific">Xenopus laevis</name>
    <name type="common">African clawed frog</name>
    <dbReference type="NCBI Taxonomy" id="8355"/>
    <lineage>
        <taxon>Eukaryota</taxon>
        <taxon>Metazoa</taxon>
        <taxon>Chordata</taxon>
        <taxon>Craniata</taxon>
        <taxon>Vertebrata</taxon>
        <taxon>Euteleostomi</taxon>
        <taxon>Amphibia</taxon>
        <taxon>Batrachia</taxon>
        <taxon>Anura</taxon>
        <taxon>Pipoidea</taxon>
        <taxon>Pipidae</taxon>
        <taxon>Xenopodinae</taxon>
        <taxon>Xenopus</taxon>
        <taxon>Xenopus</taxon>
    </lineage>
</organism>
<proteinExistence type="evidence at transcript level"/>
<name>WIF1_XENLA</name>